<evidence type="ECO:0000255" key="1">
    <source>
        <dbReference type="HAMAP-Rule" id="MF_01152"/>
    </source>
</evidence>
<feature type="chain" id="PRO_1000085303" description="Chaperone protein DnaJ">
    <location>
        <begin position="1"/>
        <end position="376"/>
    </location>
</feature>
<feature type="domain" description="J" evidence="1">
    <location>
        <begin position="5"/>
        <end position="70"/>
    </location>
</feature>
<feature type="repeat" description="CXXCXGXG motif">
    <location>
        <begin position="144"/>
        <end position="151"/>
    </location>
</feature>
<feature type="repeat" description="CXXCXGXG motif">
    <location>
        <begin position="161"/>
        <end position="168"/>
    </location>
</feature>
<feature type="repeat" description="CXXCXGXG motif">
    <location>
        <begin position="183"/>
        <end position="190"/>
    </location>
</feature>
<feature type="repeat" description="CXXCXGXG motif">
    <location>
        <begin position="197"/>
        <end position="204"/>
    </location>
</feature>
<feature type="zinc finger region" description="CR-type" evidence="1">
    <location>
        <begin position="131"/>
        <end position="209"/>
    </location>
</feature>
<feature type="binding site" evidence="1">
    <location>
        <position position="144"/>
    </location>
    <ligand>
        <name>Zn(2+)</name>
        <dbReference type="ChEBI" id="CHEBI:29105"/>
        <label>1</label>
    </ligand>
</feature>
<feature type="binding site" evidence="1">
    <location>
        <position position="147"/>
    </location>
    <ligand>
        <name>Zn(2+)</name>
        <dbReference type="ChEBI" id="CHEBI:29105"/>
        <label>1</label>
    </ligand>
</feature>
<feature type="binding site" evidence="1">
    <location>
        <position position="161"/>
    </location>
    <ligand>
        <name>Zn(2+)</name>
        <dbReference type="ChEBI" id="CHEBI:29105"/>
        <label>2</label>
    </ligand>
</feature>
<feature type="binding site" evidence="1">
    <location>
        <position position="164"/>
    </location>
    <ligand>
        <name>Zn(2+)</name>
        <dbReference type="ChEBI" id="CHEBI:29105"/>
        <label>2</label>
    </ligand>
</feature>
<feature type="binding site" evidence="1">
    <location>
        <position position="183"/>
    </location>
    <ligand>
        <name>Zn(2+)</name>
        <dbReference type="ChEBI" id="CHEBI:29105"/>
        <label>2</label>
    </ligand>
</feature>
<feature type="binding site" evidence="1">
    <location>
        <position position="186"/>
    </location>
    <ligand>
        <name>Zn(2+)</name>
        <dbReference type="ChEBI" id="CHEBI:29105"/>
        <label>2</label>
    </ligand>
</feature>
<feature type="binding site" evidence="1">
    <location>
        <position position="197"/>
    </location>
    <ligand>
        <name>Zn(2+)</name>
        <dbReference type="ChEBI" id="CHEBI:29105"/>
        <label>1</label>
    </ligand>
</feature>
<feature type="binding site" evidence="1">
    <location>
        <position position="200"/>
    </location>
    <ligand>
        <name>Zn(2+)</name>
        <dbReference type="ChEBI" id="CHEBI:29105"/>
        <label>1</label>
    </ligand>
</feature>
<protein>
    <recommendedName>
        <fullName evidence="1">Chaperone protein DnaJ</fullName>
    </recommendedName>
</protein>
<reference key="1">
    <citation type="journal article" date="2006" name="BMC Genomics">
        <title>Complete genome sequence of Shigella flexneri 5b and comparison with Shigella flexneri 2a.</title>
        <authorList>
            <person name="Nie H."/>
            <person name="Yang F."/>
            <person name="Zhang X."/>
            <person name="Yang J."/>
            <person name="Chen L."/>
            <person name="Wang J."/>
            <person name="Xiong Z."/>
            <person name="Peng J."/>
            <person name="Sun L."/>
            <person name="Dong J."/>
            <person name="Xue Y."/>
            <person name="Xu X."/>
            <person name="Chen S."/>
            <person name="Yao Z."/>
            <person name="Shen Y."/>
            <person name="Jin Q."/>
        </authorList>
    </citation>
    <scope>NUCLEOTIDE SEQUENCE [LARGE SCALE GENOMIC DNA]</scope>
    <source>
        <strain>8401</strain>
    </source>
</reference>
<gene>
    <name evidence="1" type="primary">dnaJ</name>
    <name type="ordered locus">SFV_0013</name>
</gene>
<comment type="function">
    <text evidence="1">Participates actively in the response to hyperosmotic and heat shock by preventing the aggregation of stress-denatured proteins and by disaggregating proteins, also in an autonomous, DnaK-independent fashion. Unfolded proteins bind initially to DnaJ; upon interaction with the DnaJ-bound protein, DnaK hydrolyzes its bound ATP, resulting in the formation of a stable complex. GrpE releases ADP from DnaK; ATP binding to DnaK triggers the release of the substrate protein, thus completing the reaction cycle. Several rounds of ATP-dependent interactions between DnaJ, DnaK and GrpE are required for fully efficient folding. Also involved, together with DnaK and GrpE, in the DNA replication of plasmids through activation of initiation proteins.</text>
</comment>
<comment type="cofactor">
    <cofactor evidence="1">
        <name>Zn(2+)</name>
        <dbReference type="ChEBI" id="CHEBI:29105"/>
    </cofactor>
    <text evidence="1">Binds 2 Zn(2+) ions per monomer.</text>
</comment>
<comment type="subunit">
    <text evidence="1">Homodimer.</text>
</comment>
<comment type="subcellular location">
    <subcellularLocation>
        <location evidence="1">Cytoplasm</location>
    </subcellularLocation>
</comment>
<comment type="domain">
    <text evidence="1">The J domain is necessary and sufficient to stimulate DnaK ATPase activity. Zinc center 1 plays an important role in the autonomous, DnaK-independent chaperone activity of DnaJ. Zinc center 2 is essential for interaction with DnaK and for DnaJ activity.</text>
</comment>
<comment type="similarity">
    <text evidence="1">Belongs to the DnaJ family.</text>
</comment>
<dbReference type="EMBL" id="CP000266">
    <property type="protein sequence ID" value="ABF02301.1"/>
    <property type="molecule type" value="Genomic_DNA"/>
</dbReference>
<dbReference type="RefSeq" id="WP_001118475.1">
    <property type="nucleotide sequence ID" value="NC_008258.1"/>
</dbReference>
<dbReference type="SMR" id="Q0T8H5"/>
<dbReference type="KEGG" id="sfv:SFV_0013"/>
<dbReference type="HOGENOM" id="CLU_017633_0_7_6"/>
<dbReference type="Proteomes" id="UP000000659">
    <property type="component" value="Chromosome"/>
</dbReference>
<dbReference type="GO" id="GO:0005737">
    <property type="term" value="C:cytoplasm"/>
    <property type="evidence" value="ECO:0007669"/>
    <property type="project" value="UniProtKB-SubCell"/>
</dbReference>
<dbReference type="GO" id="GO:0005524">
    <property type="term" value="F:ATP binding"/>
    <property type="evidence" value="ECO:0007669"/>
    <property type="project" value="InterPro"/>
</dbReference>
<dbReference type="GO" id="GO:0031072">
    <property type="term" value="F:heat shock protein binding"/>
    <property type="evidence" value="ECO:0007669"/>
    <property type="project" value="InterPro"/>
</dbReference>
<dbReference type="GO" id="GO:0051082">
    <property type="term" value="F:unfolded protein binding"/>
    <property type="evidence" value="ECO:0007669"/>
    <property type="project" value="UniProtKB-UniRule"/>
</dbReference>
<dbReference type="GO" id="GO:0008270">
    <property type="term" value="F:zinc ion binding"/>
    <property type="evidence" value="ECO:0007669"/>
    <property type="project" value="UniProtKB-UniRule"/>
</dbReference>
<dbReference type="GO" id="GO:0051085">
    <property type="term" value="P:chaperone cofactor-dependent protein refolding"/>
    <property type="evidence" value="ECO:0007669"/>
    <property type="project" value="TreeGrafter"/>
</dbReference>
<dbReference type="GO" id="GO:0006260">
    <property type="term" value="P:DNA replication"/>
    <property type="evidence" value="ECO:0007669"/>
    <property type="project" value="UniProtKB-KW"/>
</dbReference>
<dbReference type="GO" id="GO:0042026">
    <property type="term" value="P:protein refolding"/>
    <property type="evidence" value="ECO:0007669"/>
    <property type="project" value="TreeGrafter"/>
</dbReference>
<dbReference type="GO" id="GO:0009408">
    <property type="term" value="P:response to heat"/>
    <property type="evidence" value="ECO:0007669"/>
    <property type="project" value="InterPro"/>
</dbReference>
<dbReference type="CDD" id="cd06257">
    <property type="entry name" value="DnaJ"/>
    <property type="match status" value="1"/>
</dbReference>
<dbReference type="CDD" id="cd10747">
    <property type="entry name" value="DnaJ_C"/>
    <property type="match status" value="1"/>
</dbReference>
<dbReference type="CDD" id="cd10719">
    <property type="entry name" value="DnaJ_zf"/>
    <property type="match status" value="1"/>
</dbReference>
<dbReference type="FunFam" id="1.10.287.110:FF:000003">
    <property type="entry name" value="Molecular chaperone DnaJ"/>
    <property type="match status" value="1"/>
</dbReference>
<dbReference type="FunFam" id="2.10.230.10:FF:000002">
    <property type="entry name" value="Molecular chaperone DnaJ"/>
    <property type="match status" value="1"/>
</dbReference>
<dbReference type="FunFam" id="2.60.260.20:FF:000004">
    <property type="entry name" value="Molecular chaperone DnaJ"/>
    <property type="match status" value="1"/>
</dbReference>
<dbReference type="Gene3D" id="1.10.287.110">
    <property type="entry name" value="DnaJ domain"/>
    <property type="match status" value="1"/>
</dbReference>
<dbReference type="Gene3D" id="2.10.230.10">
    <property type="entry name" value="Heat shock protein DnaJ, cysteine-rich domain"/>
    <property type="match status" value="1"/>
</dbReference>
<dbReference type="Gene3D" id="2.60.260.20">
    <property type="entry name" value="Urease metallochaperone UreE, N-terminal domain"/>
    <property type="match status" value="2"/>
</dbReference>
<dbReference type="HAMAP" id="MF_01152">
    <property type="entry name" value="DnaJ"/>
    <property type="match status" value="1"/>
</dbReference>
<dbReference type="InterPro" id="IPR012724">
    <property type="entry name" value="DnaJ"/>
</dbReference>
<dbReference type="InterPro" id="IPR002939">
    <property type="entry name" value="DnaJ_C"/>
</dbReference>
<dbReference type="InterPro" id="IPR001623">
    <property type="entry name" value="DnaJ_domain"/>
</dbReference>
<dbReference type="InterPro" id="IPR018253">
    <property type="entry name" value="DnaJ_domain_CS"/>
</dbReference>
<dbReference type="InterPro" id="IPR008971">
    <property type="entry name" value="HSP40/DnaJ_pept-bd"/>
</dbReference>
<dbReference type="InterPro" id="IPR001305">
    <property type="entry name" value="HSP_DnaJ_Cys-rich_dom"/>
</dbReference>
<dbReference type="InterPro" id="IPR036410">
    <property type="entry name" value="HSP_DnaJ_Cys-rich_dom_sf"/>
</dbReference>
<dbReference type="InterPro" id="IPR036869">
    <property type="entry name" value="J_dom_sf"/>
</dbReference>
<dbReference type="NCBIfam" id="TIGR02349">
    <property type="entry name" value="DnaJ_bact"/>
    <property type="match status" value="1"/>
</dbReference>
<dbReference type="NCBIfam" id="NF008035">
    <property type="entry name" value="PRK10767.1"/>
    <property type="match status" value="1"/>
</dbReference>
<dbReference type="PANTHER" id="PTHR43096:SF48">
    <property type="entry name" value="CHAPERONE PROTEIN DNAJ"/>
    <property type="match status" value="1"/>
</dbReference>
<dbReference type="PANTHER" id="PTHR43096">
    <property type="entry name" value="DNAJ HOMOLOG 1, MITOCHONDRIAL-RELATED"/>
    <property type="match status" value="1"/>
</dbReference>
<dbReference type="Pfam" id="PF00226">
    <property type="entry name" value="DnaJ"/>
    <property type="match status" value="1"/>
</dbReference>
<dbReference type="Pfam" id="PF01556">
    <property type="entry name" value="DnaJ_C"/>
    <property type="match status" value="1"/>
</dbReference>
<dbReference type="Pfam" id="PF00684">
    <property type="entry name" value="DnaJ_CXXCXGXG"/>
    <property type="match status" value="1"/>
</dbReference>
<dbReference type="PRINTS" id="PR00625">
    <property type="entry name" value="JDOMAIN"/>
</dbReference>
<dbReference type="SMART" id="SM00271">
    <property type="entry name" value="DnaJ"/>
    <property type="match status" value="1"/>
</dbReference>
<dbReference type="SUPFAM" id="SSF46565">
    <property type="entry name" value="Chaperone J-domain"/>
    <property type="match status" value="1"/>
</dbReference>
<dbReference type="SUPFAM" id="SSF57938">
    <property type="entry name" value="DnaJ/Hsp40 cysteine-rich domain"/>
    <property type="match status" value="1"/>
</dbReference>
<dbReference type="SUPFAM" id="SSF49493">
    <property type="entry name" value="HSP40/DnaJ peptide-binding domain"/>
    <property type="match status" value="2"/>
</dbReference>
<dbReference type="PROSITE" id="PS00636">
    <property type="entry name" value="DNAJ_1"/>
    <property type="match status" value="1"/>
</dbReference>
<dbReference type="PROSITE" id="PS50076">
    <property type="entry name" value="DNAJ_2"/>
    <property type="match status" value="1"/>
</dbReference>
<dbReference type="PROSITE" id="PS51188">
    <property type="entry name" value="ZF_CR"/>
    <property type="match status" value="1"/>
</dbReference>
<sequence>MAKQDYYEILGVSKTAEEREIRKAYKRLAMKYHPDRNQGDKEAEAKFKEIKEAYEVLTDSQKRAAYDQYGHAAFEQGGMGGGGFGGGADFSDIFGDVFGDIFGGGRGRQRAARGADLRYNMELTLEEAVRGVTKEIRIPTLEECDVCHGSGAKPGTQPQTCPTCHGSGQVQMRQGFFAVQQTCPHCQGRGTLIKDPCNKCHGHGRVERSKTLSVKIPAGVDTGDRIRLAGEGEAGEHGAPAGDLYVQVQVKQHPIFEREGNNLYCEVPINFAMAALGGEIEVPTLDGRVKLKVPGETQTGKLFRMRGKGVKSVRGGAQGDLLCRVVVETPVGLNEKQKQLLQELQESFGGPTGEHNSPRSKSFFDGVKKFFDDLTR</sequence>
<name>DNAJ_SHIF8</name>
<keyword id="KW-0143">Chaperone</keyword>
<keyword id="KW-0963">Cytoplasm</keyword>
<keyword id="KW-0235">DNA replication</keyword>
<keyword id="KW-0479">Metal-binding</keyword>
<keyword id="KW-0677">Repeat</keyword>
<keyword id="KW-0346">Stress response</keyword>
<keyword id="KW-0862">Zinc</keyword>
<keyword id="KW-0863">Zinc-finger</keyword>
<accession>Q0T8H5</accession>
<organism>
    <name type="scientific">Shigella flexneri serotype 5b (strain 8401)</name>
    <dbReference type="NCBI Taxonomy" id="373384"/>
    <lineage>
        <taxon>Bacteria</taxon>
        <taxon>Pseudomonadati</taxon>
        <taxon>Pseudomonadota</taxon>
        <taxon>Gammaproteobacteria</taxon>
        <taxon>Enterobacterales</taxon>
        <taxon>Enterobacteriaceae</taxon>
        <taxon>Shigella</taxon>
    </lineage>
</organism>
<proteinExistence type="inferred from homology"/>